<evidence type="ECO:0000255" key="1">
    <source>
        <dbReference type="HAMAP-Rule" id="MF_01331"/>
    </source>
</evidence>
<evidence type="ECO:0000305" key="2"/>
<keyword id="KW-0687">Ribonucleoprotein</keyword>
<keyword id="KW-0689">Ribosomal protein</keyword>
<keyword id="KW-0694">RNA-binding</keyword>
<keyword id="KW-0699">rRNA-binding</keyword>
<proteinExistence type="inferred from homology"/>
<protein>
    <recommendedName>
        <fullName evidence="1">Large ribosomal subunit protein uL22</fullName>
    </recommendedName>
    <alternativeName>
        <fullName evidence="2">50S ribosomal protein L22</fullName>
    </alternativeName>
</protein>
<feature type="chain" id="PRO_1000052614" description="Large ribosomal subunit protein uL22">
    <location>
        <begin position="1"/>
        <end position="109"/>
    </location>
</feature>
<organism>
    <name type="scientific">Neisseria meningitidis serogroup C / serotype 2a (strain ATCC 700532 / DSM 15464 / FAM18)</name>
    <dbReference type="NCBI Taxonomy" id="272831"/>
    <lineage>
        <taxon>Bacteria</taxon>
        <taxon>Pseudomonadati</taxon>
        <taxon>Pseudomonadota</taxon>
        <taxon>Betaproteobacteria</taxon>
        <taxon>Neisseriales</taxon>
        <taxon>Neisseriaceae</taxon>
        <taxon>Neisseria</taxon>
    </lineage>
</organism>
<reference key="1">
    <citation type="journal article" date="2007" name="PLoS Genet.">
        <title>Meningococcal genetic variation mechanisms viewed through comparative analysis of serogroup C strain FAM18.</title>
        <authorList>
            <person name="Bentley S.D."/>
            <person name="Vernikos G.S."/>
            <person name="Snyder L.A.S."/>
            <person name="Churcher C."/>
            <person name="Arrowsmith C."/>
            <person name="Chillingworth T."/>
            <person name="Cronin A."/>
            <person name="Davis P.H."/>
            <person name="Holroyd N.E."/>
            <person name="Jagels K."/>
            <person name="Maddison M."/>
            <person name="Moule S."/>
            <person name="Rabbinowitsch E."/>
            <person name="Sharp S."/>
            <person name="Unwin L."/>
            <person name="Whitehead S."/>
            <person name="Quail M.A."/>
            <person name="Achtman M."/>
            <person name="Barrell B.G."/>
            <person name="Saunders N.J."/>
            <person name="Parkhill J."/>
        </authorList>
    </citation>
    <scope>NUCLEOTIDE SEQUENCE [LARGE SCALE GENOMIC DNA]</scope>
    <source>
        <strain>ATCC 700532 / DSM 15464 / FAM18</strain>
    </source>
</reference>
<name>RL22_NEIMF</name>
<dbReference type="EMBL" id="AM421808">
    <property type="protein sequence ID" value="CAM09456.1"/>
    <property type="molecule type" value="Genomic_DNA"/>
</dbReference>
<dbReference type="RefSeq" id="WP_002215424.1">
    <property type="nucleotide sequence ID" value="NC_008767.1"/>
</dbReference>
<dbReference type="SMR" id="A1KRH8"/>
<dbReference type="GeneID" id="93387222"/>
<dbReference type="KEGG" id="nmc:NMC0137"/>
<dbReference type="HOGENOM" id="CLU_083987_3_3_4"/>
<dbReference type="Proteomes" id="UP000002286">
    <property type="component" value="Chromosome"/>
</dbReference>
<dbReference type="GO" id="GO:0022625">
    <property type="term" value="C:cytosolic large ribosomal subunit"/>
    <property type="evidence" value="ECO:0007669"/>
    <property type="project" value="TreeGrafter"/>
</dbReference>
<dbReference type="GO" id="GO:0019843">
    <property type="term" value="F:rRNA binding"/>
    <property type="evidence" value="ECO:0007669"/>
    <property type="project" value="UniProtKB-UniRule"/>
</dbReference>
<dbReference type="GO" id="GO:0003735">
    <property type="term" value="F:structural constituent of ribosome"/>
    <property type="evidence" value="ECO:0007669"/>
    <property type="project" value="InterPro"/>
</dbReference>
<dbReference type="GO" id="GO:0006412">
    <property type="term" value="P:translation"/>
    <property type="evidence" value="ECO:0007669"/>
    <property type="project" value="UniProtKB-UniRule"/>
</dbReference>
<dbReference type="CDD" id="cd00336">
    <property type="entry name" value="Ribosomal_L22"/>
    <property type="match status" value="1"/>
</dbReference>
<dbReference type="FunFam" id="3.90.470.10:FF:000001">
    <property type="entry name" value="50S ribosomal protein L22"/>
    <property type="match status" value="1"/>
</dbReference>
<dbReference type="Gene3D" id="3.90.470.10">
    <property type="entry name" value="Ribosomal protein L22/L17"/>
    <property type="match status" value="1"/>
</dbReference>
<dbReference type="HAMAP" id="MF_01331_B">
    <property type="entry name" value="Ribosomal_uL22_B"/>
    <property type="match status" value="1"/>
</dbReference>
<dbReference type="InterPro" id="IPR001063">
    <property type="entry name" value="Ribosomal_uL22"/>
</dbReference>
<dbReference type="InterPro" id="IPR005727">
    <property type="entry name" value="Ribosomal_uL22_bac/chlpt-type"/>
</dbReference>
<dbReference type="InterPro" id="IPR047867">
    <property type="entry name" value="Ribosomal_uL22_bac/org-type"/>
</dbReference>
<dbReference type="InterPro" id="IPR018260">
    <property type="entry name" value="Ribosomal_uL22_CS"/>
</dbReference>
<dbReference type="InterPro" id="IPR036394">
    <property type="entry name" value="Ribosomal_uL22_sf"/>
</dbReference>
<dbReference type="NCBIfam" id="TIGR01044">
    <property type="entry name" value="rplV_bact"/>
    <property type="match status" value="1"/>
</dbReference>
<dbReference type="PANTHER" id="PTHR13501">
    <property type="entry name" value="CHLOROPLAST 50S RIBOSOMAL PROTEIN L22-RELATED"/>
    <property type="match status" value="1"/>
</dbReference>
<dbReference type="PANTHER" id="PTHR13501:SF8">
    <property type="entry name" value="LARGE RIBOSOMAL SUBUNIT PROTEIN UL22M"/>
    <property type="match status" value="1"/>
</dbReference>
<dbReference type="Pfam" id="PF00237">
    <property type="entry name" value="Ribosomal_L22"/>
    <property type="match status" value="1"/>
</dbReference>
<dbReference type="SUPFAM" id="SSF54843">
    <property type="entry name" value="Ribosomal protein L22"/>
    <property type="match status" value="1"/>
</dbReference>
<dbReference type="PROSITE" id="PS00464">
    <property type="entry name" value="RIBOSOMAL_L22"/>
    <property type="match status" value="1"/>
</dbReference>
<gene>
    <name evidence="1" type="primary">rplV</name>
    <name type="ordered locus">NMC0137</name>
</gene>
<accession>A1KRH8</accession>
<sequence length="109" mass="11909">MRVNAQHKNARISAQKARLVADLIRGKDVAQALNILAFSPKKGAELIKKVLESAIANAEHNNGADIDELKVVTIFVDKGPSLKRFQARAKGRGNRIEKQTCHINVTVGN</sequence>
<comment type="function">
    <text evidence="1">This protein binds specifically to 23S rRNA; its binding is stimulated by other ribosomal proteins, e.g. L4, L17, and L20. It is important during the early stages of 50S assembly. It makes multiple contacts with different domains of the 23S rRNA in the assembled 50S subunit and ribosome (By similarity).</text>
</comment>
<comment type="function">
    <text evidence="1">The globular domain of the protein is located near the polypeptide exit tunnel on the outside of the subunit, while an extended beta-hairpin is found that lines the wall of the exit tunnel in the center of the 70S ribosome.</text>
</comment>
<comment type="subunit">
    <text evidence="1">Part of the 50S ribosomal subunit.</text>
</comment>
<comment type="similarity">
    <text evidence="1">Belongs to the universal ribosomal protein uL22 family.</text>
</comment>